<accession>Q9I6R0</accession>
<keyword id="KW-0002">3D-structure</keyword>
<keyword id="KW-0012">Acyltransferase</keyword>
<keyword id="KW-0058">Aromatic hydrocarbons catabolism</keyword>
<keyword id="KW-1185">Reference proteome</keyword>
<keyword id="KW-0808">Transferase</keyword>
<protein>
    <recommendedName>
        <fullName>Beta-ketoadipyl-CoA thiolase</fullName>
        <ecNumber>2.3.1.174</ecNumber>
    </recommendedName>
    <alternativeName>
        <fullName>3-oxoadipyl-CoA thiolase</fullName>
    </alternativeName>
</protein>
<evidence type="ECO:0000250" key="1"/>
<evidence type="ECO:0000255" key="2">
    <source>
        <dbReference type="PROSITE-ProRule" id="PRU10020"/>
    </source>
</evidence>
<evidence type="ECO:0000305" key="3"/>
<dbReference type="EC" id="2.3.1.174"/>
<dbReference type="EMBL" id="AE004091">
    <property type="protein sequence ID" value="AAG03617.1"/>
    <property type="molecule type" value="Genomic_DNA"/>
</dbReference>
<dbReference type="PIR" id="D83618">
    <property type="entry name" value="D83618"/>
</dbReference>
<dbReference type="RefSeq" id="NP_248919.1">
    <property type="nucleotide sequence ID" value="NC_002516.2"/>
</dbReference>
<dbReference type="RefSeq" id="WP_003101891.1">
    <property type="nucleotide sequence ID" value="NZ_QZGE01000024.1"/>
</dbReference>
<dbReference type="PDB" id="8GQH">
    <property type="method" value="X-ray"/>
    <property type="resolution" value="2.20 A"/>
    <property type="chains" value="A/B/C/D=1-401"/>
</dbReference>
<dbReference type="PDBsum" id="8GQH"/>
<dbReference type="SMR" id="Q9I6R0"/>
<dbReference type="FunCoup" id="Q9I6R0">
    <property type="interactions" value="162"/>
</dbReference>
<dbReference type="STRING" id="208964.PA0228"/>
<dbReference type="PaxDb" id="208964-PA0228"/>
<dbReference type="GeneID" id="877715"/>
<dbReference type="KEGG" id="pae:PA0228"/>
<dbReference type="PATRIC" id="fig|208964.12.peg.238"/>
<dbReference type="PseudoCAP" id="PA0228"/>
<dbReference type="HOGENOM" id="CLU_031026_2_2_6"/>
<dbReference type="InParanoid" id="Q9I6R0"/>
<dbReference type="OrthoDB" id="9764638at2"/>
<dbReference type="PhylomeDB" id="Q9I6R0"/>
<dbReference type="BioCyc" id="PAER208964:G1FZ6-230-MONOMER"/>
<dbReference type="UniPathway" id="UPA00157">
    <property type="reaction ID" value="UER00263"/>
</dbReference>
<dbReference type="Proteomes" id="UP000002438">
    <property type="component" value="Chromosome"/>
</dbReference>
<dbReference type="GO" id="GO:0033812">
    <property type="term" value="F:3-oxoadipyl-CoA thiolase activity"/>
    <property type="evidence" value="ECO:0007669"/>
    <property type="project" value="UniProtKB-EC"/>
</dbReference>
<dbReference type="GO" id="GO:0003988">
    <property type="term" value="F:acetyl-CoA C-acyltransferase activity"/>
    <property type="evidence" value="ECO:0000318"/>
    <property type="project" value="GO_Central"/>
</dbReference>
<dbReference type="GO" id="GO:0019619">
    <property type="term" value="P:3,4-dihydroxybenzoate catabolic process"/>
    <property type="evidence" value="ECO:0007669"/>
    <property type="project" value="InterPro"/>
</dbReference>
<dbReference type="GO" id="GO:0042952">
    <property type="term" value="P:beta-ketoadipate pathway"/>
    <property type="evidence" value="ECO:0007669"/>
    <property type="project" value="UniProtKB-UniPathway"/>
</dbReference>
<dbReference type="GO" id="GO:0006635">
    <property type="term" value="P:fatty acid beta-oxidation"/>
    <property type="evidence" value="ECO:0000318"/>
    <property type="project" value="GO_Central"/>
</dbReference>
<dbReference type="GO" id="GO:0010124">
    <property type="term" value="P:phenylacetate catabolic process"/>
    <property type="evidence" value="ECO:0000318"/>
    <property type="project" value="GO_Central"/>
</dbReference>
<dbReference type="CDD" id="cd00751">
    <property type="entry name" value="thiolase"/>
    <property type="match status" value="1"/>
</dbReference>
<dbReference type="FunFam" id="3.40.47.10:FF:000010">
    <property type="entry name" value="Acetyl-CoA acetyltransferase (Thiolase)"/>
    <property type="match status" value="1"/>
</dbReference>
<dbReference type="Gene3D" id="3.40.47.10">
    <property type="match status" value="1"/>
</dbReference>
<dbReference type="InterPro" id="IPR012793">
    <property type="entry name" value="PcaF"/>
</dbReference>
<dbReference type="InterPro" id="IPR002155">
    <property type="entry name" value="Thiolase"/>
</dbReference>
<dbReference type="InterPro" id="IPR016039">
    <property type="entry name" value="Thiolase-like"/>
</dbReference>
<dbReference type="InterPro" id="IPR020615">
    <property type="entry name" value="Thiolase_acyl_enz_int_AS"/>
</dbReference>
<dbReference type="InterPro" id="IPR020610">
    <property type="entry name" value="Thiolase_AS"/>
</dbReference>
<dbReference type="InterPro" id="IPR020617">
    <property type="entry name" value="Thiolase_C"/>
</dbReference>
<dbReference type="InterPro" id="IPR020613">
    <property type="entry name" value="Thiolase_CS"/>
</dbReference>
<dbReference type="InterPro" id="IPR020616">
    <property type="entry name" value="Thiolase_N"/>
</dbReference>
<dbReference type="NCBIfam" id="TIGR01930">
    <property type="entry name" value="AcCoA-C-Actrans"/>
    <property type="match status" value="1"/>
</dbReference>
<dbReference type="NCBIfam" id="TIGR02430">
    <property type="entry name" value="pcaF"/>
    <property type="match status" value="1"/>
</dbReference>
<dbReference type="NCBIfam" id="NF006551">
    <property type="entry name" value="PRK09050.1"/>
    <property type="match status" value="1"/>
</dbReference>
<dbReference type="PANTHER" id="PTHR18919:SF107">
    <property type="entry name" value="ACETYL-COA ACETYLTRANSFERASE, CYTOSOLIC"/>
    <property type="match status" value="1"/>
</dbReference>
<dbReference type="PANTHER" id="PTHR18919">
    <property type="entry name" value="ACETYL-COA C-ACYLTRANSFERASE"/>
    <property type="match status" value="1"/>
</dbReference>
<dbReference type="Pfam" id="PF02803">
    <property type="entry name" value="Thiolase_C"/>
    <property type="match status" value="1"/>
</dbReference>
<dbReference type="Pfam" id="PF00108">
    <property type="entry name" value="Thiolase_N"/>
    <property type="match status" value="1"/>
</dbReference>
<dbReference type="PIRSF" id="PIRSF000429">
    <property type="entry name" value="Ac-CoA_Ac_transf"/>
    <property type="match status" value="1"/>
</dbReference>
<dbReference type="SUPFAM" id="SSF53901">
    <property type="entry name" value="Thiolase-like"/>
    <property type="match status" value="2"/>
</dbReference>
<dbReference type="PROSITE" id="PS00098">
    <property type="entry name" value="THIOLASE_1"/>
    <property type="match status" value="1"/>
</dbReference>
<dbReference type="PROSITE" id="PS00737">
    <property type="entry name" value="THIOLASE_2"/>
    <property type="match status" value="1"/>
</dbReference>
<dbReference type="PROSITE" id="PS00099">
    <property type="entry name" value="THIOLASE_3"/>
    <property type="match status" value="1"/>
</dbReference>
<sequence length="401" mass="42106">MSREVFICDAVRTPIGRFGGSLSAVRADDLAAVPLKALVERNPGVDWSALDEVFLGCANQAGEDNRNVARMALLLAGLPESVPGVTLNRLCASGMDAIGTAFRAIACGEMELAIAGGVESMSRAPYVMGKADSAFGRGQKIEDTTIGWRFVNPLMKEQYGIDPMPQTADNVADDYRVSRADQDAFALRSQQRAGRAQEAGFFAEEIVPVTIRGRKGDTLVEHDEHPRPDTTLEALARLKPVNGPEKTVTAGNASGVNDGAAALVLASAEAVEKHGLTPRARVLGMASAGVAPRIMGIGPVPAVRKLLRRLDLAIDAFDVIELNEAFASQGLACLRELGVADDSEKVNPNGGAIALGHPLGMSGARLVLTALHQLEKSGGRRGLATMCVGVGQGLALAIERV</sequence>
<organism>
    <name type="scientific">Pseudomonas aeruginosa (strain ATCC 15692 / DSM 22644 / CIP 104116 / JCM 14847 / LMG 12228 / 1C / PRS 101 / PAO1)</name>
    <dbReference type="NCBI Taxonomy" id="208964"/>
    <lineage>
        <taxon>Bacteria</taxon>
        <taxon>Pseudomonadati</taxon>
        <taxon>Pseudomonadota</taxon>
        <taxon>Gammaproteobacteria</taxon>
        <taxon>Pseudomonadales</taxon>
        <taxon>Pseudomonadaceae</taxon>
        <taxon>Pseudomonas</taxon>
    </lineage>
</organism>
<proteinExistence type="evidence at protein level"/>
<gene>
    <name type="primary">pcaF</name>
    <name type="ordered locus">PA0228</name>
</gene>
<reference key="1">
    <citation type="journal article" date="2000" name="Nature">
        <title>Complete genome sequence of Pseudomonas aeruginosa PAO1, an opportunistic pathogen.</title>
        <authorList>
            <person name="Stover C.K."/>
            <person name="Pham X.-Q.T."/>
            <person name="Erwin A.L."/>
            <person name="Mizoguchi S.D."/>
            <person name="Warrener P."/>
            <person name="Hickey M.J."/>
            <person name="Brinkman F.S.L."/>
            <person name="Hufnagle W.O."/>
            <person name="Kowalik D.J."/>
            <person name="Lagrou M."/>
            <person name="Garber R.L."/>
            <person name="Goltry L."/>
            <person name="Tolentino E."/>
            <person name="Westbrock-Wadman S."/>
            <person name="Yuan Y."/>
            <person name="Brody L.L."/>
            <person name="Coulter S.N."/>
            <person name="Folger K.R."/>
            <person name="Kas A."/>
            <person name="Larbig K."/>
            <person name="Lim R.M."/>
            <person name="Smith K.A."/>
            <person name="Spencer D.H."/>
            <person name="Wong G.K.-S."/>
            <person name="Wu Z."/>
            <person name="Paulsen I.T."/>
            <person name="Reizer J."/>
            <person name="Saier M.H. Jr."/>
            <person name="Hancock R.E.W."/>
            <person name="Lory S."/>
            <person name="Olson M.V."/>
        </authorList>
    </citation>
    <scope>NUCLEOTIDE SEQUENCE [LARGE SCALE GENOMIC DNA]</scope>
    <source>
        <strain>ATCC 15692 / DSM 22644 / CIP 104116 / JCM 14847 / LMG 12228 / 1C / PRS 101 / PAO1</strain>
    </source>
</reference>
<name>PCAF_PSEAE</name>
<feature type="chain" id="PRO_0000287819" description="Beta-ketoadipyl-CoA thiolase">
    <location>
        <begin position="1"/>
        <end position="401"/>
    </location>
</feature>
<feature type="active site" description="Acyl-thioester intermediate" evidence="1">
    <location>
        <position position="91"/>
    </location>
</feature>
<feature type="active site" description="Proton acceptor" evidence="2">
    <location>
        <position position="357"/>
    </location>
</feature>
<feature type="active site" description="Proton acceptor" evidence="2">
    <location>
        <position position="387"/>
    </location>
</feature>
<comment type="function">
    <text evidence="1">Catalyzes thiolytic cleavage of beta-ketoadipyl-CoA to succinyl-CoA and acetyl-CoA.</text>
</comment>
<comment type="catalytic activity">
    <reaction>
        <text>succinyl-CoA + acetyl-CoA = 3-oxoadipyl-CoA + CoA</text>
        <dbReference type="Rhea" id="RHEA:19481"/>
        <dbReference type="ChEBI" id="CHEBI:57287"/>
        <dbReference type="ChEBI" id="CHEBI:57288"/>
        <dbReference type="ChEBI" id="CHEBI:57292"/>
        <dbReference type="ChEBI" id="CHEBI:57348"/>
        <dbReference type="EC" id="2.3.1.174"/>
    </reaction>
</comment>
<comment type="pathway">
    <text>Aromatic compound metabolism; beta-ketoadipate pathway; acetyl-CoA and succinyl-CoA from 3-oxoadipate: step 2/2.</text>
</comment>
<comment type="similarity">
    <text evidence="3">Belongs to the thiolase-like superfamily. Thiolase family.</text>
</comment>